<organism>
    <name type="scientific">Homo sapiens</name>
    <name type="common">Human</name>
    <dbReference type="NCBI Taxonomy" id="9606"/>
    <lineage>
        <taxon>Eukaryota</taxon>
        <taxon>Metazoa</taxon>
        <taxon>Chordata</taxon>
        <taxon>Craniata</taxon>
        <taxon>Vertebrata</taxon>
        <taxon>Euteleostomi</taxon>
        <taxon>Mammalia</taxon>
        <taxon>Eutheria</taxon>
        <taxon>Euarchontoglires</taxon>
        <taxon>Primates</taxon>
        <taxon>Haplorrhini</taxon>
        <taxon>Catarrhini</taxon>
        <taxon>Hominidae</taxon>
        <taxon>Homo</taxon>
    </lineage>
</organism>
<protein>
    <recommendedName>
        <fullName>Integral membrane protein DGCR2/IDD</fullName>
    </recommendedName>
</protein>
<accession>P98153</accession>
<accession>A6NIB5</accession>
<accession>A8K6K5</accession>
<accession>B5TY34</accession>
<accession>B7Z935</accession>
<keyword id="KW-0025">Alternative splicing</keyword>
<keyword id="KW-0130">Cell adhesion</keyword>
<keyword id="KW-1015">Disulfide bond</keyword>
<keyword id="KW-0325">Glycoprotein</keyword>
<keyword id="KW-0430">Lectin</keyword>
<keyword id="KW-0472">Membrane</keyword>
<keyword id="KW-0597">Phosphoprotein</keyword>
<keyword id="KW-1267">Proteomics identification</keyword>
<keyword id="KW-0675">Receptor</keyword>
<keyword id="KW-1185">Reference proteome</keyword>
<keyword id="KW-0732">Signal</keyword>
<keyword id="KW-0812">Transmembrane</keyword>
<keyword id="KW-1133">Transmembrane helix</keyword>
<dbReference type="EMBL" id="X84076">
    <property type="protein sequence ID" value="CAA58883.1"/>
    <property type="molecule type" value="mRNA"/>
</dbReference>
<dbReference type="EMBL" id="X83545">
    <property type="protein sequence ID" value="CAA58536.1"/>
    <property type="molecule type" value="mRNA"/>
</dbReference>
<dbReference type="EMBL" id="L46352">
    <property type="protein sequence ID" value="AAB59561.1"/>
    <property type="molecule type" value="mRNA"/>
</dbReference>
<dbReference type="EMBL" id="D79985">
    <property type="protein sequence ID" value="BAA11480.1"/>
    <property type="molecule type" value="mRNA"/>
</dbReference>
<dbReference type="EMBL" id="FJ032369">
    <property type="protein sequence ID" value="ACI00235.1"/>
    <property type="molecule type" value="mRNA"/>
</dbReference>
<dbReference type="EMBL" id="AK291670">
    <property type="protein sequence ID" value="BAF84359.1"/>
    <property type="molecule type" value="mRNA"/>
</dbReference>
<dbReference type="EMBL" id="AK304382">
    <property type="protein sequence ID" value="BAH14171.1"/>
    <property type="molecule type" value="mRNA"/>
</dbReference>
<dbReference type="EMBL" id="CR456433">
    <property type="protein sequence ID" value="CAG30319.1"/>
    <property type="molecule type" value="mRNA"/>
</dbReference>
<dbReference type="EMBL" id="AC000095">
    <property type="status" value="NOT_ANNOTATED_CDS"/>
    <property type="molecule type" value="Genomic_DNA"/>
</dbReference>
<dbReference type="EMBL" id="AC004461">
    <property type="status" value="NOT_ANNOTATED_CDS"/>
    <property type="molecule type" value="Genomic_DNA"/>
</dbReference>
<dbReference type="EMBL" id="AC004462">
    <property type="status" value="NOT_ANNOTATED_CDS"/>
    <property type="molecule type" value="Genomic_DNA"/>
</dbReference>
<dbReference type="EMBL" id="AC004471">
    <property type="status" value="NOT_ANNOTATED_CDS"/>
    <property type="molecule type" value="Genomic_DNA"/>
</dbReference>
<dbReference type="EMBL" id="CH471176">
    <property type="protein sequence ID" value="EAX03061.1"/>
    <property type="molecule type" value="Genomic_DNA"/>
</dbReference>
<dbReference type="EMBL" id="BC032430">
    <property type="protein sequence ID" value="AAH32430.1"/>
    <property type="molecule type" value="mRNA"/>
</dbReference>
<dbReference type="CCDS" id="CCDS33598.1">
    <molecule id="P98153-1"/>
</dbReference>
<dbReference type="CCDS" id="CCDS54496.1">
    <molecule id="P98153-2"/>
</dbReference>
<dbReference type="PIR" id="I37579">
    <property type="entry name" value="I37579"/>
</dbReference>
<dbReference type="PIR" id="I84463">
    <property type="entry name" value="I84463"/>
</dbReference>
<dbReference type="RefSeq" id="NP_001167004.1">
    <molecule id="P98153-2"/>
    <property type="nucleotide sequence ID" value="NM_001173533.2"/>
</dbReference>
<dbReference type="RefSeq" id="NP_001167005.1">
    <property type="nucleotide sequence ID" value="NM_001173534.1"/>
</dbReference>
<dbReference type="RefSeq" id="NP_005128.1">
    <molecule id="P98153-1"/>
    <property type="nucleotide sequence ID" value="NM_005137.3"/>
</dbReference>
<dbReference type="SMR" id="P98153"/>
<dbReference type="BioGRID" id="115314">
    <property type="interactions" value="270"/>
</dbReference>
<dbReference type="FunCoup" id="P98153">
    <property type="interactions" value="409"/>
</dbReference>
<dbReference type="IntAct" id="P98153">
    <property type="interactions" value="164"/>
</dbReference>
<dbReference type="MINT" id="P98153"/>
<dbReference type="STRING" id="9606.ENSP00000263196"/>
<dbReference type="GlyConnect" id="1404">
    <property type="glycosylation" value="1 N-Linked glycan (1 site)"/>
</dbReference>
<dbReference type="GlyCosmos" id="P98153">
    <property type="glycosylation" value="2 sites, 1 glycan"/>
</dbReference>
<dbReference type="GlyGen" id="P98153">
    <property type="glycosylation" value="3 sites, 4 N-linked glycans (1 site)"/>
</dbReference>
<dbReference type="iPTMnet" id="P98153"/>
<dbReference type="PhosphoSitePlus" id="P98153"/>
<dbReference type="BioMuta" id="DGCR2"/>
<dbReference type="DMDM" id="1708396"/>
<dbReference type="jPOST" id="P98153"/>
<dbReference type="MassIVE" id="P98153"/>
<dbReference type="PaxDb" id="9606-ENSP00000263196"/>
<dbReference type="PeptideAtlas" id="P98153"/>
<dbReference type="ProteomicsDB" id="57792">
    <molecule id="P98153-1"/>
</dbReference>
<dbReference type="ProteomicsDB" id="57793">
    <molecule id="P98153-2"/>
</dbReference>
<dbReference type="Pumba" id="P98153"/>
<dbReference type="Antibodypedia" id="7402">
    <property type="antibodies" value="153 antibodies from 24 providers"/>
</dbReference>
<dbReference type="DNASU" id="9993"/>
<dbReference type="Ensembl" id="ENST00000263196.12">
    <molecule id="P98153-1"/>
    <property type="protein sequence ID" value="ENSP00000263196.7"/>
    <property type="gene ID" value="ENSG00000070413.21"/>
</dbReference>
<dbReference type="Ensembl" id="ENST00000537045.5">
    <molecule id="P98153-2"/>
    <property type="protein sequence ID" value="ENSP00000440062.1"/>
    <property type="gene ID" value="ENSG00000070413.21"/>
</dbReference>
<dbReference type="GeneID" id="9993"/>
<dbReference type="KEGG" id="hsa:9993"/>
<dbReference type="MANE-Select" id="ENST00000263196.12">
    <property type="protein sequence ID" value="ENSP00000263196.7"/>
    <property type="RefSeq nucleotide sequence ID" value="NM_005137.3"/>
    <property type="RefSeq protein sequence ID" value="NP_005128.1"/>
</dbReference>
<dbReference type="UCSC" id="uc062bkk.1">
    <molecule id="P98153-1"/>
    <property type="organism name" value="human"/>
</dbReference>
<dbReference type="AGR" id="HGNC:2845"/>
<dbReference type="CTD" id="9993"/>
<dbReference type="DisGeNET" id="9993"/>
<dbReference type="GeneCards" id="DGCR2"/>
<dbReference type="GeneReviews" id="DGCR2"/>
<dbReference type="HGNC" id="HGNC:2845">
    <property type="gene designation" value="DGCR2"/>
</dbReference>
<dbReference type="HPA" id="ENSG00000070413">
    <property type="expression patterns" value="Low tissue specificity"/>
</dbReference>
<dbReference type="MalaCards" id="DGCR2"/>
<dbReference type="MIM" id="600594">
    <property type="type" value="gene"/>
</dbReference>
<dbReference type="neXtProt" id="NX_P98153"/>
<dbReference type="OpenTargets" id="ENSG00000070413"/>
<dbReference type="PharmGKB" id="PA27307"/>
<dbReference type="VEuPathDB" id="HostDB:ENSG00000070413"/>
<dbReference type="eggNOG" id="KOG1215">
    <property type="taxonomic scope" value="Eukaryota"/>
</dbReference>
<dbReference type="GeneTree" id="ENSGT00390000017655"/>
<dbReference type="HOGENOM" id="CLU_036610_0_0_1"/>
<dbReference type="InParanoid" id="P98153"/>
<dbReference type="OMA" id="QGCQQYL"/>
<dbReference type="OrthoDB" id="8998425at2759"/>
<dbReference type="PAN-GO" id="P98153">
    <property type="GO annotations" value="1 GO annotation based on evolutionary models"/>
</dbReference>
<dbReference type="PhylomeDB" id="P98153"/>
<dbReference type="TreeFam" id="TF330997"/>
<dbReference type="PathwayCommons" id="P98153"/>
<dbReference type="SignaLink" id="P98153"/>
<dbReference type="BioGRID-ORCS" id="9993">
    <property type="hits" value="12 hits in 1153 CRISPR screens"/>
</dbReference>
<dbReference type="ChiTaRS" id="DGCR2">
    <property type="organism name" value="human"/>
</dbReference>
<dbReference type="GeneWiki" id="DGCR2"/>
<dbReference type="GenomeRNAi" id="9993"/>
<dbReference type="Pharos" id="P98153">
    <property type="development level" value="Tbio"/>
</dbReference>
<dbReference type="PRO" id="PR:P98153"/>
<dbReference type="Proteomes" id="UP000005640">
    <property type="component" value="Chromosome 22"/>
</dbReference>
<dbReference type="RNAct" id="P98153">
    <property type="molecule type" value="protein"/>
</dbReference>
<dbReference type="Bgee" id="ENSG00000070413">
    <property type="expression patterns" value="Expressed in penis and 207 other cell types or tissues"/>
</dbReference>
<dbReference type="ExpressionAtlas" id="P98153">
    <property type="expression patterns" value="baseline and differential"/>
</dbReference>
<dbReference type="GO" id="GO:0016020">
    <property type="term" value="C:membrane"/>
    <property type="evidence" value="ECO:0000318"/>
    <property type="project" value="GO_Central"/>
</dbReference>
<dbReference type="GO" id="GO:0030246">
    <property type="term" value="F:carbohydrate binding"/>
    <property type="evidence" value="ECO:0007669"/>
    <property type="project" value="UniProtKB-KW"/>
</dbReference>
<dbReference type="GO" id="GO:0009887">
    <property type="term" value="P:animal organ morphogenesis"/>
    <property type="evidence" value="ECO:0000304"/>
    <property type="project" value="ProtInc"/>
</dbReference>
<dbReference type="GO" id="GO:0007155">
    <property type="term" value="P:cell adhesion"/>
    <property type="evidence" value="ECO:0007669"/>
    <property type="project" value="UniProtKB-KW"/>
</dbReference>
<dbReference type="GO" id="GO:0050890">
    <property type="term" value="P:cognition"/>
    <property type="evidence" value="ECO:0000315"/>
    <property type="project" value="UniProtKB"/>
</dbReference>
<dbReference type="CDD" id="cd03599">
    <property type="entry name" value="CLECT_DGCR2_like"/>
    <property type="match status" value="1"/>
</dbReference>
<dbReference type="CDD" id="cd00112">
    <property type="entry name" value="LDLa"/>
    <property type="match status" value="1"/>
</dbReference>
<dbReference type="FunFam" id="4.10.400.10:FF:000115">
    <property type="entry name" value="integral membrane protein DGCR2/IDD isoform X1"/>
    <property type="match status" value="1"/>
</dbReference>
<dbReference type="FunFam" id="3.10.100.10:FF:000028">
    <property type="entry name" value="integral membrane protein DGCR2/IDD isoform X2"/>
    <property type="match status" value="1"/>
</dbReference>
<dbReference type="Gene3D" id="4.10.400.10">
    <property type="entry name" value="Low-density Lipoprotein Receptor"/>
    <property type="match status" value="1"/>
</dbReference>
<dbReference type="Gene3D" id="3.10.100.10">
    <property type="entry name" value="Mannose-Binding Protein A, subunit A"/>
    <property type="match status" value="1"/>
</dbReference>
<dbReference type="InterPro" id="IPR001304">
    <property type="entry name" value="C-type_lectin-like"/>
</dbReference>
<dbReference type="InterPro" id="IPR016186">
    <property type="entry name" value="C-type_lectin-like/link_sf"/>
</dbReference>
<dbReference type="InterPro" id="IPR016187">
    <property type="entry name" value="CTDL_fold"/>
</dbReference>
<dbReference type="InterPro" id="IPR034010">
    <property type="entry name" value="DGCR2-like_CTLD"/>
</dbReference>
<dbReference type="InterPro" id="IPR042378">
    <property type="entry name" value="IDD"/>
</dbReference>
<dbReference type="InterPro" id="IPR036055">
    <property type="entry name" value="LDL_receptor-like_sf"/>
</dbReference>
<dbReference type="InterPro" id="IPR023415">
    <property type="entry name" value="LDLR_class-A_CS"/>
</dbReference>
<dbReference type="InterPro" id="IPR002172">
    <property type="entry name" value="LDrepeatLR_classA_rpt"/>
</dbReference>
<dbReference type="InterPro" id="IPR001007">
    <property type="entry name" value="VWF_dom"/>
</dbReference>
<dbReference type="PANTHER" id="PTHR15256">
    <property type="entry name" value="INTEGRAL MEMBRANE PROTEIN DGCR2/IDD"/>
    <property type="match status" value="1"/>
</dbReference>
<dbReference type="PANTHER" id="PTHR15256:SF6">
    <property type="entry name" value="INTEGRAL MEMBRANE PROTEIN DGCR2_IDD"/>
    <property type="match status" value="1"/>
</dbReference>
<dbReference type="Pfam" id="PF00057">
    <property type="entry name" value="Ldl_recept_a"/>
    <property type="match status" value="1"/>
</dbReference>
<dbReference type="Pfam" id="PF00059">
    <property type="entry name" value="Lectin_C"/>
    <property type="match status" value="1"/>
</dbReference>
<dbReference type="SMART" id="SM00034">
    <property type="entry name" value="CLECT"/>
    <property type="match status" value="1"/>
</dbReference>
<dbReference type="SMART" id="SM00192">
    <property type="entry name" value="LDLa"/>
    <property type="match status" value="1"/>
</dbReference>
<dbReference type="SMART" id="SM00214">
    <property type="entry name" value="VWC"/>
    <property type="match status" value="1"/>
</dbReference>
<dbReference type="SUPFAM" id="SSF56436">
    <property type="entry name" value="C-type lectin-like"/>
    <property type="match status" value="1"/>
</dbReference>
<dbReference type="SUPFAM" id="SSF57424">
    <property type="entry name" value="LDL receptor-like module"/>
    <property type="match status" value="1"/>
</dbReference>
<dbReference type="PROSITE" id="PS50041">
    <property type="entry name" value="C_TYPE_LECTIN_2"/>
    <property type="match status" value="1"/>
</dbReference>
<dbReference type="PROSITE" id="PS01209">
    <property type="entry name" value="LDLRA_1"/>
    <property type="match status" value="1"/>
</dbReference>
<dbReference type="PROSITE" id="PS50068">
    <property type="entry name" value="LDLRA_2"/>
    <property type="match status" value="1"/>
</dbReference>
<dbReference type="PROSITE" id="PS01208">
    <property type="entry name" value="VWFC_1"/>
    <property type="match status" value="1"/>
</dbReference>
<reference key="1">
    <citation type="journal article" date="1995" name="Hum. Mol. Genet.">
        <title>Cloning of a balanced translocation breakpoint in the DiGeorge syndrome critical region and isolation of a novel potential adhesion receptor gene in its vicinity.</title>
        <authorList>
            <person name="Demczuk S."/>
            <person name="Aledo R."/>
            <person name="Zucman J."/>
            <person name="Delattre O."/>
            <person name="Desmaze C."/>
            <person name="Dauphinot L."/>
            <person name="Jalbert P."/>
            <person name="Rouleau G.A."/>
            <person name="Thomas G."/>
            <person name="Aurias A."/>
        </authorList>
    </citation>
    <scope>NUCLEOTIDE SEQUENCE [MRNA] (ISOFORM 1)</scope>
    <source>
        <tissue>Fetal brain</tissue>
    </source>
</reference>
<reference key="2">
    <citation type="journal article" date="1995" name="Hum. Mol. Genet.">
        <title>Isolation of a gene encoding an integral membrane protein from the vicinity of a balanced translocation breakpoint associated with DiGeorge syndrome.</title>
        <authorList>
            <person name="Wadey R."/>
            <person name="Daw S."/>
            <person name="Taylor C."/>
            <person name="Atif U."/>
            <person name="Kamath S."/>
            <person name="Halford S."/>
            <person name="O'Donnell H."/>
            <person name="Wilson D."/>
            <person name="Goodship J."/>
            <person name="Burn J."/>
            <person name="Scambler P.J."/>
        </authorList>
    </citation>
    <scope>NUCLEOTIDE SEQUENCE [MRNA] (ISOFORM 1)</scope>
    <scope>VARIANT ALA-473</scope>
    <source>
        <tissue>Brain</tissue>
    </source>
</reference>
<reference key="3">
    <citation type="journal article" date="2009" name="BMC Genomics">
        <title>Discovery of novel human transcript variants by analysis of intronic single-block EST with polyadenylation site.</title>
        <authorList>
            <person name="Wang P."/>
            <person name="Yu P."/>
            <person name="Gao P."/>
            <person name="Shi T."/>
            <person name="Ma D."/>
        </authorList>
    </citation>
    <scope>NUCLEOTIDE SEQUENCE [MRNA] (ISOFORM 3)</scope>
</reference>
<reference key="4">
    <citation type="journal article" date="1996" name="DNA Res.">
        <title>Prediction of the coding sequences of unidentified human genes. V. The coding sequences of 40 new genes (KIAA0161-KIAA0200) deduced by analysis of cDNA clones from human cell line KG-1.</title>
        <authorList>
            <person name="Nagase T."/>
            <person name="Seki N."/>
            <person name="Ishikawa K."/>
            <person name="Tanaka A."/>
            <person name="Nomura N."/>
        </authorList>
    </citation>
    <scope>NUCLEOTIDE SEQUENCE [LARGE SCALE MRNA] (ISOFORM 1)</scope>
    <source>
        <tissue>Bone marrow</tissue>
    </source>
</reference>
<reference key="5">
    <citation type="journal article" date="2004" name="Nat. Genet.">
        <title>Complete sequencing and characterization of 21,243 full-length human cDNAs.</title>
        <authorList>
            <person name="Ota T."/>
            <person name="Suzuki Y."/>
            <person name="Nishikawa T."/>
            <person name="Otsuki T."/>
            <person name="Sugiyama T."/>
            <person name="Irie R."/>
            <person name="Wakamatsu A."/>
            <person name="Hayashi K."/>
            <person name="Sato H."/>
            <person name="Nagai K."/>
            <person name="Kimura K."/>
            <person name="Makita H."/>
            <person name="Sekine M."/>
            <person name="Obayashi M."/>
            <person name="Nishi T."/>
            <person name="Shibahara T."/>
            <person name="Tanaka T."/>
            <person name="Ishii S."/>
            <person name="Yamamoto J."/>
            <person name="Saito K."/>
            <person name="Kawai Y."/>
            <person name="Isono Y."/>
            <person name="Nakamura Y."/>
            <person name="Nagahari K."/>
            <person name="Murakami K."/>
            <person name="Yasuda T."/>
            <person name="Iwayanagi T."/>
            <person name="Wagatsuma M."/>
            <person name="Shiratori A."/>
            <person name="Sudo H."/>
            <person name="Hosoiri T."/>
            <person name="Kaku Y."/>
            <person name="Kodaira H."/>
            <person name="Kondo H."/>
            <person name="Sugawara M."/>
            <person name="Takahashi M."/>
            <person name="Kanda K."/>
            <person name="Yokoi T."/>
            <person name="Furuya T."/>
            <person name="Kikkawa E."/>
            <person name="Omura Y."/>
            <person name="Abe K."/>
            <person name="Kamihara K."/>
            <person name="Katsuta N."/>
            <person name="Sato K."/>
            <person name="Tanikawa M."/>
            <person name="Yamazaki M."/>
            <person name="Ninomiya K."/>
            <person name="Ishibashi T."/>
            <person name="Yamashita H."/>
            <person name="Murakawa K."/>
            <person name="Fujimori K."/>
            <person name="Tanai H."/>
            <person name="Kimata M."/>
            <person name="Watanabe M."/>
            <person name="Hiraoka S."/>
            <person name="Chiba Y."/>
            <person name="Ishida S."/>
            <person name="Ono Y."/>
            <person name="Takiguchi S."/>
            <person name="Watanabe S."/>
            <person name="Yosida M."/>
            <person name="Hotuta T."/>
            <person name="Kusano J."/>
            <person name="Kanehori K."/>
            <person name="Takahashi-Fujii A."/>
            <person name="Hara H."/>
            <person name="Tanase T.-O."/>
            <person name="Nomura Y."/>
            <person name="Togiya S."/>
            <person name="Komai F."/>
            <person name="Hara R."/>
            <person name="Takeuchi K."/>
            <person name="Arita M."/>
            <person name="Imose N."/>
            <person name="Musashino K."/>
            <person name="Yuuki H."/>
            <person name="Oshima A."/>
            <person name="Sasaki N."/>
            <person name="Aotsuka S."/>
            <person name="Yoshikawa Y."/>
            <person name="Matsunawa H."/>
            <person name="Ichihara T."/>
            <person name="Shiohata N."/>
            <person name="Sano S."/>
            <person name="Moriya S."/>
            <person name="Momiyama H."/>
            <person name="Satoh N."/>
            <person name="Takami S."/>
            <person name="Terashima Y."/>
            <person name="Suzuki O."/>
            <person name="Nakagawa S."/>
            <person name="Senoh A."/>
            <person name="Mizoguchi H."/>
            <person name="Goto Y."/>
            <person name="Shimizu F."/>
            <person name="Wakebe H."/>
            <person name="Hishigaki H."/>
            <person name="Watanabe T."/>
            <person name="Sugiyama A."/>
            <person name="Takemoto M."/>
            <person name="Kawakami B."/>
            <person name="Yamazaki M."/>
            <person name="Watanabe K."/>
            <person name="Kumagai A."/>
            <person name="Itakura S."/>
            <person name="Fukuzumi Y."/>
            <person name="Fujimori Y."/>
            <person name="Komiyama M."/>
            <person name="Tashiro H."/>
            <person name="Tanigami A."/>
            <person name="Fujiwara T."/>
            <person name="Ono T."/>
            <person name="Yamada K."/>
            <person name="Fujii Y."/>
            <person name="Ozaki K."/>
            <person name="Hirao M."/>
            <person name="Ohmori Y."/>
            <person name="Kawabata A."/>
            <person name="Hikiji T."/>
            <person name="Kobatake N."/>
            <person name="Inagaki H."/>
            <person name="Ikema Y."/>
            <person name="Okamoto S."/>
            <person name="Okitani R."/>
            <person name="Kawakami T."/>
            <person name="Noguchi S."/>
            <person name="Itoh T."/>
            <person name="Shigeta K."/>
            <person name="Senba T."/>
            <person name="Matsumura K."/>
            <person name="Nakajima Y."/>
            <person name="Mizuno T."/>
            <person name="Morinaga M."/>
            <person name="Sasaki M."/>
            <person name="Togashi T."/>
            <person name="Oyama M."/>
            <person name="Hata H."/>
            <person name="Watanabe M."/>
            <person name="Komatsu T."/>
            <person name="Mizushima-Sugano J."/>
            <person name="Satoh T."/>
            <person name="Shirai Y."/>
            <person name="Takahashi Y."/>
            <person name="Nakagawa K."/>
            <person name="Okumura K."/>
            <person name="Nagase T."/>
            <person name="Nomura N."/>
            <person name="Kikuchi H."/>
            <person name="Masuho Y."/>
            <person name="Yamashita R."/>
            <person name="Nakai K."/>
            <person name="Yada T."/>
            <person name="Nakamura Y."/>
            <person name="Ohara O."/>
            <person name="Isogai T."/>
            <person name="Sugano S."/>
        </authorList>
    </citation>
    <scope>NUCLEOTIDE SEQUENCE [LARGE SCALE MRNA] (ISOFORMS 1 AND 2)</scope>
    <source>
        <tissue>Placenta</tissue>
        <tissue>Trachea</tissue>
    </source>
</reference>
<reference key="6">
    <citation type="journal article" date="2004" name="Genome Biol.">
        <title>A genome annotation-driven approach to cloning the human ORFeome.</title>
        <authorList>
            <person name="Collins J.E."/>
            <person name="Wright C.L."/>
            <person name="Edwards C.A."/>
            <person name="Davis M.P."/>
            <person name="Grinham J.A."/>
            <person name="Cole C.G."/>
            <person name="Goward M.E."/>
            <person name="Aguado B."/>
            <person name="Mallya M."/>
            <person name="Mokrab Y."/>
            <person name="Huckle E.J."/>
            <person name="Beare D.M."/>
            <person name="Dunham I."/>
        </authorList>
    </citation>
    <scope>NUCLEOTIDE SEQUENCE [LARGE SCALE MRNA] (ISOFORM 1)</scope>
</reference>
<reference key="7">
    <citation type="journal article" date="1999" name="Nature">
        <title>The DNA sequence of human chromosome 22.</title>
        <authorList>
            <person name="Dunham I."/>
            <person name="Hunt A.R."/>
            <person name="Collins J.E."/>
            <person name="Bruskiewich R."/>
            <person name="Beare D.M."/>
            <person name="Clamp M."/>
            <person name="Smink L.J."/>
            <person name="Ainscough R."/>
            <person name="Almeida J.P."/>
            <person name="Babbage A.K."/>
            <person name="Bagguley C."/>
            <person name="Bailey J."/>
            <person name="Barlow K.F."/>
            <person name="Bates K.N."/>
            <person name="Beasley O.P."/>
            <person name="Bird C.P."/>
            <person name="Blakey S.E."/>
            <person name="Bridgeman A.M."/>
            <person name="Buck D."/>
            <person name="Burgess J."/>
            <person name="Burrill W.D."/>
            <person name="Burton J."/>
            <person name="Carder C."/>
            <person name="Carter N.P."/>
            <person name="Chen Y."/>
            <person name="Clark G."/>
            <person name="Clegg S.M."/>
            <person name="Cobley V.E."/>
            <person name="Cole C.G."/>
            <person name="Collier R.E."/>
            <person name="Connor R."/>
            <person name="Conroy D."/>
            <person name="Corby N.R."/>
            <person name="Coville G.J."/>
            <person name="Cox A.V."/>
            <person name="Davis J."/>
            <person name="Dawson E."/>
            <person name="Dhami P.D."/>
            <person name="Dockree C."/>
            <person name="Dodsworth S.J."/>
            <person name="Durbin R.M."/>
            <person name="Ellington A.G."/>
            <person name="Evans K.L."/>
            <person name="Fey J.M."/>
            <person name="Fleming K."/>
            <person name="French L."/>
            <person name="Garner A.A."/>
            <person name="Gilbert J.G.R."/>
            <person name="Goward M.E."/>
            <person name="Grafham D.V."/>
            <person name="Griffiths M.N.D."/>
            <person name="Hall C."/>
            <person name="Hall R.E."/>
            <person name="Hall-Tamlyn G."/>
            <person name="Heathcott R.W."/>
            <person name="Ho S."/>
            <person name="Holmes S."/>
            <person name="Hunt S.E."/>
            <person name="Jones M.C."/>
            <person name="Kershaw J."/>
            <person name="Kimberley A.M."/>
            <person name="King A."/>
            <person name="Laird G.K."/>
            <person name="Langford C.F."/>
            <person name="Leversha M.A."/>
            <person name="Lloyd C."/>
            <person name="Lloyd D.M."/>
            <person name="Martyn I.D."/>
            <person name="Mashreghi-Mohammadi M."/>
            <person name="Matthews L.H."/>
            <person name="Mccann O.T."/>
            <person name="Mcclay J."/>
            <person name="Mclaren S."/>
            <person name="McMurray A.A."/>
            <person name="Milne S.A."/>
            <person name="Mortimore B.J."/>
            <person name="Odell C.N."/>
            <person name="Pavitt R."/>
            <person name="Pearce A.V."/>
            <person name="Pearson D."/>
            <person name="Phillimore B.J.C.T."/>
            <person name="Phillips S.H."/>
            <person name="Plumb R.W."/>
            <person name="Ramsay H."/>
            <person name="Ramsey Y."/>
            <person name="Rogers L."/>
            <person name="Ross M.T."/>
            <person name="Scott C.E."/>
            <person name="Sehra H.K."/>
            <person name="Skuce C.D."/>
            <person name="Smalley S."/>
            <person name="Smith M.L."/>
            <person name="Soderlund C."/>
            <person name="Spragon L."/>
            <person name="Steward C.A."/>
            <person name="Sulston J.E."/>
            <person name="Swann R.M."/>
            <person name="Vaudin M."/>
            <person name="Wall M."/>
            <person name="Wallis J.M."/>
            <person name="Whiteley M.N."/>
            <person name="Willey D.L."/>
            <person name="Williams L."/>
            <person name="Williams S.A."/>
            <person name="Williamson H."/>
            <person name="Wilmer T.E."/>
            <person name="Wilming L."/>
            <person name="Wright C.L."/>
            <person name="Hubbard T."/>
            <person name="Bentley D.R."/>
            <person name="Beck S."/>
            <person name="Rogers J."/>
            <person name="Shimizu N."/>
            <person name="Minoshima S."/>
            <person name="Kawasaki K."/>
            <person name="Sasaki T."/>
            <person name="Asakawa S."/>
            <person name="Kudoh J."/>
            <person name="Shintani A."/>
            <person name="Shibuya K."/>
            <person name="Yoshizaki Y."/>
            <person name="Aoki N."/>
            <person name="Mitsuyama S."/>
            <person name="Roe B.A."/>
            <person name="Chen F."/>
            <person name="Chu L."/>
            <person name="Crabtree J."/>
            <person name="Deschamps S."/>
            <person name="Do A."/>
            <person name="Do T."/>
            <person name="Dorman A."/>
            <person name="Fang F."/>
            <person name="Fu Y."/>
            <person name="Hu P."/>
            <person name="Hua A."/>
            <person name="Kenton S."/>
            <person name="Lai H."/>
            <person name="Lao H.I."/>
            <person name="Lewis J."/>
            <person name="Lewis S."/>
            <person name="Lin S.-P."/>
            <person name="Loh P."/>
            <person name="Malaj E."/>
            <person name="Nguyen T."/>
            <person name="Pan H."/>
            <person name="Phan S."/>
            <person name="Qi S."/>
            <person name="Qian Y."/>
            <person name="Ray L."/>
            <person name="Ren Q."/>
            <person name="Shaull S."/>
            <person name="Sloan D."/>
            <person name="Song L."/>
            <person name="Wang Q."/>
            <person name="Wang Y."/>
            <person name="Wang Z."/>
            <person name="White J."/>
            <person name="Willingham D."/>
            <person name="Wu H."/>
            <person name="Yao Z."/>
            <person name="Zhan M."/>
            <person name="Zhang G."/>
            <person name="Chissoe S."/>
            <person name="Murray J."/>
            <person name="Miller N."/>
            <person name="Minx P."/>
            <person name="Fulton R."/>
            <person name="Johnson D."/>
            <person name="Bemis G."/>
            <person name="Bentley D."/>
            <person name="Bradshaw H."/>
            <person name="Bourne S."/>
            <person name="Cordes M."/>
            <person name="Du Z."/>
            <person name="Fulton L."/>
            <person name="Goela D."/>
            <person name="Graves T."/>
            <person name="Hawkins J."/>
            <person name="Hinds K."/>
            <person name="Kemp K."/>
            <person name="Latreille P."/>
            <person name="Layman D."/>
            <person name="Ozersky P."/>
            <person name="Rohlfing T."/>
            <person name="Scheet P."/>
            <person name="Walker C."/>
            <person name="Wamsley A."/>
            <person name="Wohldmann P."/>
            <person name="Pepin K."/>
            <person name="Nelson J."/>
            <person name="Korf I."/>
            <person name="Bedell J.A."/>
            <person name="Hillier L.W."/>
            <person name="Mardis E."/>
            <person name="Waterston R."/>
            <person name="Wilson R."/>
            <person name="Emanuel B.S."/>
            <person name="Shaikh T."/>
            <person name="Kurahashi H."/>
            <person name="Saitta S."/>
            <person name="Budarf M.L."/>
            <person name="McDermid H.E."/>
            <person name="Johnson A."/>
            <person name="Wong A.C.C."/>
            <person name="Morrow B.E."/>
            <person name="Edelmann L."/>
            <person name="Kim U.J."/>
            <person name="Shizuya H."/>
            <person name="Simon M.I."/>
            <person name="Dumanski J.P."/>
            <person name="Peyrard M."/>
            <person name="Kedra D."/>
            <person name="Seroussi E."/>
            <person name="Fransson I."/>
            <person name="Tapia I."/>
            <person name="Bruder C.E."/>
            <person name="O'Brien K.P."/>
            <person name="Wilkinson P."/>
            <person name="Bodenteich A."/>
            <person name="Hartman K."/>
            <person name="Hu X."/>
            <person name="Khan A.S."/>
            <person name="Lane L."/>
            <person name="Tilahun Y."/>
            <person name="Wright H."/>
        </authorList>
    </citation>
    <scope>NUCLEOTIDE SEQUENCE [LARGE SCALE GENOMIC DNA]</scope>
</reference>
<reference key="8">
    <citation type="submission" date="2005-09" db="EMBL/GenBank/DDBJ databases">
        <authorList>
            <person name="Mural R.J."/>
            <person name="Istrail S."/>
            <person name="Sutton G.G."/>
            <person name="Florea L."/>
            <person name="Halpern A.L."/>
            <person name="Mobarry C.M."/>
            <person name="Lippert R."/>
            <person name="Walenz B."/>
            <person name="Shatkay H."/>
            <person name="Dew I."/>
            <person name="Miller J.R."/>
            <person name="Flanigan M.J."/>
            <person name="Edwards N.J."/>
            <person name="Bolanos R."/>
            <person name="Fasulo D."/>
            <person name="Halldorsson B.V."/>
            <person name="Hannenhalli S."/>
            <person name="Turner R."/>
            <person name="Yooseph S."/>
            <person name="Lu F."/>
            <person name="Nusskern D.R."/>
            <person name="Shue B.C."/>
            <person name="Zheng X.H."/>
            <person name="Zhong F."/>
            <person name="Delcher A.L."/>
            <person name="Huson D.H."/>
            <person name="Kravitz S.A."/>
            <person name="Mouchard L."/>
            <person name="Reinert K."/>
            <person name="Remington K.A."/>
            <person name="Clark A.G."/>
            <person name="Waterman M.S."/>
            <person name="Eichler E.E."/>
            <person name="Adams M.D."/>
            <person name="Hunkapiller M.W."/>
            <person name="Myers E.W."/>
            <person name="Venter J.C."/>
        </authorList>
    </citation>
    <scope>NUCLEOTIDE SEQUENCE [LARGE SCALE GENOMIC DNA]</scope>
</reference>
<reference key="9">
    <citation type="journal article" date="2004" name="Genome Res.">
        <title>The status, quality, and expansion of the NIH full-length cDNA project: the Mammalian Gene Collection (MGC).</title>
        <authorList>
            <consortium name="The MGC Project Team"/>
        </authorList>
    </citation>
    <scope>NUCLEOTIDE SEQUENCE [LARGE SCALE MRNA] (ISOFORM 1)</scope>
    <source>
        <tissue>Brain</tissue>
    </source>
</reference>
<reference key="10">
    <citation type="journal article" date="2013" name="J. Proteome Res.">
        <title>Toward a comprehensive characterization of a human cancer cell phosphoproteome.</title>
        <authorList>
            <person name="Zhou H."/>
            <person name="Di Palma S."/>
            <person name="Preisinger C."/>
            <person name="Peng M."/>
            <person name="Polat A.N."/>
            <person name="Heck A.J."/>
            <person name="Mohammed S."/>
        </authorList>
    </citation>
    <scope>PHOSPHORYLATION [LARGE SCALE ANALYSIS] AT SER-381</scope>
    <scope>IDENTIFICATION BY MASS SPECTROMETRY [LARGE SCALE ANALYSIS]</scope>
    <source>
        <tissue>Cervix carcinoma</tissue>
        <tissue>Erythroleukemia</tissue>
    </source>
</reference>
<comment type="function">
    <text>Putative adhesion receptor, that could be involved in cell-cell or cell-matrix interactions required for normal cell differentiation and migration.</text>
</comment>
<comment type="interaction">
    <interactant intactId="EBI-3908153">
        <id>P98153</id>
    </interactant>
    <interactant intactId="EBI-1059186">
        <id>Q8N1I0</id>
        <label>DOCK4</label>
    </interactant>
    <organismsDiffer>false</organismsDiffer>
    <experiments>3</experiments>
</comment>
<comment type="subcellular location">
    <subcellularLocation>
        <location>Membrane</location>
        <topology>Single-pass type I membrane protein</topology>
    </subcellularLocation>
</comment>
<comment type="alternative products">
    <event type="alternative splicing"/>
    <isoform>
        <id>P98153-1</id>
        <name>1</name>
        <sequence type="displayed"/>
    </isoform>
    <isoform>
        <id>P98153-2</id>
        <name>2</name>
        <sequence type="described" ref="VSP_042886"/>
    </isoform>
    <isoform>
        <id>P98153-3</id>
        <name>3</name>
        <sequence type="described" ref="VSP_057188 VSP_057189"/>
    </isoform>
</comment>
<comment type="tissue specificity">
    <text>Predominantly expressed in brain, heart, lung and fetal kidney. Low levels in liver and adult kidney.</text>
</comment>
<feature type="signal peptide" evidence="2">
    <location>
        <begin position="1"/>
        <end position="20"/>
    </location>
</feature>
<feature type="chain" id="PRO_0000021484" description="Integral membrane protein DGCR2/IDD">
    <location>
        <begin position="21"/>
        <end position="550"/>
    </location>
</feature>
<feature type="topological domain" description="Extracellular" evidence="2">
    <location>
        <begin position="21"/>
        <end position="349"/>
    </location>
</feature>
<feature type="transmembrane region" description="Helical" evidence="2">
    <location>
        <begin position="350"/>
        <end position="368"/>
    </location>
</feature>
<feature type="topological domain" description="Cytoplasmic" evidence="2">
    <location>
        <begin position="369"/>
        <end position="550"/>
    </location>
</feature>
<feature type="domain" description="LDL-receptor class A" evidence="4">
    <location>
        <begin position="28"/>
        <end position="68"/>
    </location>
</feature>
<feature type="domain" description="C-type lectin" evidence="3">
    <location>
        <begin position="115"/>
        <end position="241"/>
    </location>
</feature>
<feature type="domain" description="VWFC">
    <location>
        <begin position="270"/>
        <end position="333"/>
    </location>
</feature>
<feature type="region of interest" description="Disordered" evidence="5">
    <location>
        <begin position="69"/>
        <end position="92"/>
    </location>
</feature>
<feature type="region of interest" description="Disordered" evidence="5">
    <location>
        <begin position="500"/>
        <end position="550"/>
    </location>
</feature>
<feature type="compositionally biased region" description="Basic and acidic residues" evidence="5">
    <location>
        <begin position="71"/>
        <end position="92"/>
    </location>
</feature>
<feature type="modified residue" description="Phosphoserine" evidence="9">
    <location>
        <position position="381"/>
    </location>
</feature>
<feature type="glycosylation site" description="N-linked (GlcNAc...) asparagine" evidence="2">
    <location>
        <position position="149"/>
    </location>
</feature>
<feature type="glycosylation site" description="N-linked (GlcNAc...) asparagine" evidence="2">
    <location>
        <position position="196"/>
    </location>
</feature>
<feature type="disulfide bond" evidence="1">
    <location>
        <begin position="30"/>
        <end position="44"/>
    </location>
</feature>
<feature type="disulfide bond" evidence="1">
    <location>
        <begin position="37"/>
        <end position="57"/>
    </location>
</feature>
<feature type="disulfide bond" evidence="1">
    <location>
        <begin position="51"/>
        <end position="66"/>
    </location>
</feature>
<feature type="disulfide bond" evidence="1">
    <location>
        <begin position="145"/>
        <end position="265"/>
    </location>
</feature>
<feature type="disulfide bond" evidence="1">
    <location>
        <begin position="233"/>
        <end position="257"/>
    </location>
</feature>
<feature type="splice variant" id="VSP_042886" description="In isoform 2." evidence="7">
    <location>
        <begin position="26"/>
        <end position="66"/>
    </location>
</feature>
<feature type="splice variant" id="VSP_057188" description="In isoform 3." evidence="8">
    <original>QGCQQYRKDPKEC</original>
    <variation>HGCSPLSCTARAT</variation>
    <location>
        <begin position="315"/>
        <end position="327"/>
    </location>
</feature>
<feature type="splice variant" id="VSP_057189" description="In isoform 3." evidence="8">
    <location>
        <begin position="328"/>
        <end position="550"/>
    </location>
</feature>
<feature type="sequence variant" id="VAR_020046" description="In dbSNP:rs2072123." evidence="6">
    <original>V</original>
    <variation>A</variation>
    <location>
        <position position="473"/>
    </location>
</feature>
<evidence type="ECO:0000250" key="1"/>
<evidence type="ECO:0000255" key="2"/>
<evidence type="ECO:0000255" key="3">
    <source>
        <dbReference type="PROSITE-ProRule" id="PRU00040"/>
    </source>
</evidence>
<evidence type="ECO:0000255" key="4">
    <source>
        <dbReference type="PROSITE-ProRule" id="PRU00124"/>
    </source>
</evidence>
<evidence type="ECO:0000256" key="5">
    <source>
        <dbReference type="SAM" id="MobiDB-lite"/>
    </source>
</evidence>
<evidence type="ECO:0000269" key="6">
    <source>
    </source>
</evidence>
<evidence type="ECO:0000303" key="7">
    <source>
    </source>
</evidence>
<evidence type="ECO:0000303" key="8">
    <source>
    </source>
</evidence>
<evidence type="ECO:0007744" key="9">
    <source>
    </source>
</evidence>
<proteinExistence type="evidence at protein level"/>
<name>IDD_HUMAN</name>
<sequence>MVPKADSGAFLLLFLLVLTVTEPLRPELRCNPGQFACRSGTIQCIPLPWQCDGWATCEDESDEANCPEVTGEVRPHHGKEAVDPRQGRARGGDPSHFHAVNVAQPVRFSSFLGKCPTGWHHYEGTASCYRVYLSGENYWDAAQTCQRLNGSLATFSTDQELRFVLAQEWDQPERSFGWKDQRKLWVGYQYVITGRNRSLEGRWEVAFKGSSEVFLPPDPIFASAMSENDNVFCAQLQCFHFPTLRHHDLHSWHAESCYEKSSFLCKRSQTCVDIKDNVVDEGFYFTPKGDDPCLSCTCHGGEPEMCVAALCERPQGCQQYRKDPKECCKFMCLDPDGNSLFDSMASGMRLVVSCISSFLILSLLLFMVHRLRQRRRERIESLIGANLHHFNLGRRIPGFDYGPDGFGTGLTPLHLSDDGEGGTFHFHDPPPPYTAYKYPDIGQPDDPPPPYEASIHPDSVFYDPADDDAFEPVEVSLPAPGDGGSEGALLRRLEQPLPTAGASLADLEDSADSSSALLVPPDPAQSGSTPAAEALPGGGRHSRSSLNTVV</sequence>
<gene>
    <name type="primary">DGCR2</name>
    <name type="synonym">IDD</name>
    <name type="synonym">KIAA0163</name>
</gene>